<feature type="chain" id="PRO_1000145888" description="Probable chemoreceptor glutamine deamidase CheD">
    <location>
        <begin position="1"/>
        <end position="162"/>
    </location>
</feature>
<accession>B2TLQ3</accession>
<gene>
    <name evidence="1" type="primary">cheD</name>
    <name type="ordered locus">CLL_A0797</name>
</gene>
<comment type="function">
    <text evidence="1">Probably deamidates glutamine residues to glutamate on methyl-accepting chemotaxis receptors (MCPs), playing an important role in chemotaxis.</text>
</comment>
<comment type="catalytic activity">
    <reaction evidence="1">
        <text>L-glutaminyl-[protein] + H2O = L-glutamyl-[protein] + NH4(+)</text>
        <dbReference type="Rhea" id="RHEA:16441"/>
        <dbReference type="Rhea" id="RHEA-COMP:10207"/>
        <dbReference type="Rhea" id="RHEA-COMP:10208"/>
        <dbReference type="ChEBI" id="CHEBI:15377"/>
        <dbReference type="ChEBI" id="CHEBI:28938"/>
        <dbReference type="ChEBI" id="CHEBI:29973"/>
        <dbReference type="ChEBI" id="CHEBI:30011"/>
        <dbReference type="EC" id="3.5.1.44"/>
    </reaction>
</comment>
<comment type="similarity">
    <text evidence="1">Belongs to the CheD family.</text>
</comment>
<keyword id="KW-0145">Chemotaxis</keyword>
<keyword id="KW-0378">Hydrolase</keyword>
<evidence type="ECO:0000255" key="1">
    <source>
        <dbReference type="HAMAP-Rule" id="MF_01440"/>
    </source>
</evidence>
<reference key="1">
    <citation type="submission" date="2008-04" db="EMBL/GenBank/DDBJ databases">
        <title>Complete sequence of Clostridium botulinum strain Eklund.</title>
        <authorList>
            <person name="Brinkac L.M."/>
            <person name="Brown J.L."/>
            <person name="Bruce D."/>
            <person name="Detter C."/>
            <person name="Munk C."/>
            <person name="Smith L.A."/>
            <person name="Smith T.J."/>
            <person name="Sutton G."/>
            <person name="Brettin T.S."/>
        </authorList>
    </citation>
    <scope>NUCLEOTIDE SEQUENCE [LARGE SCALE GENOMIC DNA]</scope>
    <source>
        <strain>Eklund 17B / Type B</strain>
    </source>
</reference>
<protein>
    <recommendedName>
        <fullName evidence="1">Probable chemoreceptor glutamine deamidase CheD</fullName>
        <ecNumber evidence="1">3.5.1.44</ecNumber>
    </recommendedName>
</protein>
<organism>
    <name type="scientific">Clostridium botulinum (strain Eklund 17B / Type B)</name>
    <dbReference type="NCBI Taxonomy" id="935198"/>
    <lineage>
        <taxon>Bacteria</taxon>
        <taxon>Bacillati</taxon>
        <taxon>Bacillota</taxon>
        <taxon>Clostridia</taxon>
        <taxon>Eubacteriales</taxon>
        <taxon>Clostridiaceae</taxon>
        <taxon>Clostridium</taxon>
    </lineage>
</organism>
<proteinExistence type="inferred from homology"/>
<name>CHED_CLOBB</name>
<sequence>MENTEVKVGIADLNLVSSPNKIMTIGLGSCIGIALYDRRSKLAGLSHIMLPDSTQFKNVTNPMKFADLAIPLLIKKMEAKGCQKRNLIAKIAGGASMFSFSDKSMVGDIGKRNIQAVKKSLSEERIQIIAEDVGGNKGRTMILDALDGKVTLKIVGIGIVEL</sequence>
<dbReference type="EC" id="3.5.1.44" evidence="1"/>
<dbReference type="EMBL" id="CP001056">
    <property type="protein sequence ID" value="ACD23257.1"/>
    <property type="molecule type" value="Genomic_DNA"/>
</dbReference>
<dbReference type="SMR" id="B2TLQ3"/>
<dbReference type="KEGG" id="cbk:CLL_A0797"/>
<dbReference type="PATRIC" id="fig|935198.13.peg.746"/>
<dbReference type="HOGENOM" id="CLU_087854_2_0_9"/>
<dbReference type="Proteomes" id="UP000001195">
    <property type="component" value="Chromosome"/>
</dbReference>
<dbReference type="GO" id="GO:0050568">
    <property type="term" value="F:protein-glutamine glutaminase activity"/>
    <property type="evidence" value="ECO:0007669"/>
    <property type="project" value="UniProtKB-UniRule"/>
</dbReference>
<dbReference type="GO" id="GO:0006935">
    <property type="term" value="P:chemotaxis"/>
    <property type="evidence" value="ECO:0007669"/>
    <property type="project" value="UniProtKB-UniRule"/>
</dbReference>
<dbReference type="CDD" id="cd16352">
    <property type="entry name" value="CheD"/>
    <property type="match status" value="1"/>
</dbReference>
<dbReference type="Gene3D" id="3.30.1330.200">
    <property type="match status" value="1"/>
</dbReference>
<dbReference type="HAMAP" id="MF_01440">
    <property type="entry name" value="CheD"/>
    <property type="match status" value="1"/>
</dbReference>
<dbReference type="InterPro" id="IPR038592">
    <property type="entry name" value="CheD-like_sf"/>
</dbReference>
<dbReference type="InterPro" id="IPR005659">
    <property type="entry name" value="Chemorcpt_Glu_NH3ase_CheD"/>
</dbReference>
<dbReference type="InterPro" id="IPR011324">
    <property type="entry name" value="Cytotoxic_necrot_fac-like_cat"/>
</dbReference>
<dbReference type="NCBIfam" id="NF010015">
    <property type="entry name" value="PRK13490.1"/>
    <property type="match status" value="1"/>
</dbReference>
<dbReference type="PANTHER" id="PTHR35147">
    <property type="entry name" value="CHEMORECEPTOR GLUTAMINE DEAMIDASE CHED-RELATED"/>
    <property type="match status" value="1"/>
</dbReference>
<dbReference type="PANTHER" id="PTHR35147:SF1">
    <property type="entry name" value="CHEMORECEPTOR GLUTAMINE DEAMIDASE CHED-RELATED"/>
    <property type="match status" value="1"/>
</dbReference>
<dbReference type="Pfam" id="PF03975">
    <property type="entry name" value="CheD"/>
    <property type="match status" value="1"/>
</dbReference>
<dbReference type="SUPFAM" id="SSF64438">
    <property type="entry name" value="CNF1/YfiH-like putative cysteine hydrolases"/>
    <property type="match status" value="1"/>
</dbReference>